<evidence type="ECO:0000256" key="1">
    <source>
        <dbReference type="SAM" id="MobiDB-lite"/>
    </source>
</evidence>
<evidence type="ECO:0000269" key="2">
    <source>
    </source>
</evidence>
<evidence type="ECO:0000269" key="3">
    <source>
    </source>
</evidence>
<evidence type="ECO:0000269" key="4">
    <source>
    </source>
</evidence>
<accession>P75992</accession>
<accession>Q2MBH0</accession>
<dbReference type="EMBL" id="U00096">
    <property type="protein sequence ID" value="AAC74249.1"/>
    <property type="molecule type" value="Genomic_DNA"/>
</dbReference>
<dbReference type="EMBL" id="AP009048">
    <property type="protein sequence ID" value="BAE76386.1"/>
    <property type="molecule type" value="Genomic_DNA"/>
</dbReference>
<dbReference type="PIR" id="B64862">
    <property type="entry name" value="B64862"/>
</dbReference>
<dbReference type="RefSeq" id="NP_415683.1">
    <property type="nucleotide sequence ID" value="NC_000913.3"/>
</dbReference>
<dbReference type="RefSeq" id="WP_000858002.1">
    <property type="nucleotide sequence ID" value="NZ_STEB01000023.1"/>
</dbReference>
<dbReference type="SMR" id="P75992"/>
<dbReference type="BioGRID" id="4259445">
    <property type="interactions" value="28"/>
</dbReference>
<dbReference type="FunCoup" id="P75992">
    <property type="interactions" value="51"/>
</dbReference>
<dbReference type="IntAct" id="P75992">
    <property type="interactions" value="18"/>
</dbReference>
<dbReference type="STRING" id="511145.b1165"/>
<dbReference type="jPOST" id="P75992"/>
<dbReference type="PaxDb" id="511145-b1165"/>
<dbReference type="EnsemblBacteria" id="AAC74249">
    <property type="protein sequence ID" value="AAC74249"/>
    <property type="gene ID" value="b1165"/>
</dbReference>
<dbReference type="GeneID" id="948991"/>
<dbReference type="KEGG" id="ecj:JW1152"/>
<dbReference type="KEGG" id="eco:b1165"/>
<dbReference type="KEGG" id="ecoc:C3026_06865"/>
<dbReference type="PATRIC" id="fig|83333.103.peg.1955"/>
<dbReference type="EchoBASE" id="EB4037"/>
<dbReference type="eggNOG" id="ENOG502ZPHM">
    <property type="taxonomic scope" value="Bacteria"/>
</dbReference>
<dbReference type="HOGENOM" id="CLU_2436104_0_0_6"/>
<dbReference type="InParanoid" id="P75992"/>
<dbReference type="OrthoDB" id="6593306at2"/>
<dbReference type="BioCyc" id="EcoCyc:G6605-MONOMER"/>
<dbReference type="PRO" id="PR:P75992"/>
<dbReference type="Proteomes" id="UP000000625">
    <property type="component" value="Chromosome"/>
</dbReference>
<dbReference type="GO" id="GO:1900191">
    <property type="term" value="P:negative regulation of single-species biofilm formation"/>
    <property type="evidence" value="ECO:0000315"/>
    <property type="project" value="EcoCyc"/>
</dbReference>
<comment type="function">
    <text>Probably a connector protein for RcsB/C regulation of biofilm formation, providing additional signal input into the two-component signaling pathway. May serve to stimulate biofilm maturation, probably via the Rcs phosphorelay. Mild overexpression at 16 degrees Celsius increases the production of colanic acid, an exopolysaccharide and matrix component, and reduces adhesive curli fimbriae expression. Both of these effects require RcsB.</text>
</comment>
<comment type="induction">
    <text evidence="2 3 4">Induced by 5-fluorouracil. Strongly induced at 16 degrees Celsius. Expression is dependent on RpoS, repressed by YcgE. At 16 degrees Celsius with blue light irradiation, expression of this operon is absolutely dependent on YcgF for relief from YcgE repression. Part of the ycgZ-ymgA-ariR-ymgC operon.</text>
</comment>
<organism>
    <name type="scientific">Escherichia coli (strain K12)</name>
    <dbReference type="NCBI Taxonomy" id="83333"/>
    <lineage>
        <taxon>Bacteria</taxon>
        <taxon>Pseudomonadati</taxon>
        <taxon>Pseudomonadota</taxon>
        <taxon>Gammaproteobacteria</taxon>
        <taxon>Enterobacterales</taxon>
        <taxon>Enterobacteriaceae</taxon>
        <taxon>Escherichia</taxon>
    </lineage>
</organism>
<proteinExistence type="evidence at transcript level"/>
<reference key="1">
    <citation type="journal article" date="1997" name="Science">
        <title>The complete genome sequence of Escherichia coli K-12.</title>
        <authorList>
            <person name="Blattner F.R."/>
            <person name="Plunkett G. III"/>
            <person name="Bloch C.A."/>
            <person name="Perna N.T."/>
            <person name="Burland V."/>
            <person name="Riley M."/>
            <person name="Collado-Vides J."/>
            <person name="Glasner J.D."/>
            <person name="Rode C.K."/>
            <person name="Mayhew G.F."/>
            <person name="Gregor J."/>
            <person name="Davis N.W."/>
            <person name="Kirkpatrick H.A."/>
            <person name="Goeden M.A."/>
            <person name="Rose D.J."/>
            <person name="Mau B."/>
            <person name="Shao Y."/>
        </authorList>
    </citation>
    <scope>NUCLEOTIDE SEQUENCE [LARGE SCALE GENOMIC DNA]</scope>
    <source>
        <strain>K12 / MG1655 / ATCC 47076</strain>
    </source>
</reference>
<reference key="2">
    <citation type="journal article" date="2006" name="Mol. Syst. Biol.">
        <title>Highly accurate genome sequences of Escherichia coli K-12 strains MG1655 and W3110.</title>
        <authorList>
            <person name="Hayashi K."/>
            <person name="Morooka N."/>
            <person name="Yamamoto Y."/>
            <person name="Fujita K."/>
            <person name="Isono K."/>
            <person name="Choi S."/>
            <person name="Ohtsubo E."/>
            <person name="Baba T."/>
            <person name="Wanner B.L."/>
            <person name="Mori H."/>
            <person name="Horiuchi T."/>
        </authorList>
    </citation>
    <scope>NUCLEOTIDE SEQUENCE [LARGE SCALE GENOMIC DNA]</scope>
    <source>
        <strain>K12 / W3110 / ATCC 27325 / DSM 5911</strain>
    </source>
</reference>
<reference key="3">
    <citation type="journal article" date="2008" name="Microbiology">
        <title>Low temperature (23 degrees C) increases expression of biofilm-, cold-shock- and RpoS-dependent genes in Escherichia coli K-12.</title>
        <authorList>
            <person name="White-Ziegler C.A."/>
            <person name="Um S."/>
            <person name="Perez N.M."/>
            <person name="Berns A.L."/>
            <person name="Malhowski A.J."/>
            <person name="Young S."/>
        </authorList>
    </citation>
    <scope>INDUCTION BY LOW TEMPERATURE</scope>
    <scope>RPOS-DEPENDENCE</scope>
    <source>
        <strain>K12 / MC4100</strain>
    </source>
</reference>
<reference key="4">
    <citation type="journal article" date="2009" name="Appl. Microbiol. Biotechnol.">
        <title>5-Fluorouracil reduces biofilm formation in Escherichia coli K-12 through global regulator AriR as an antivirulence compound.</title>
        <authorList>
            <person name="Attila C."/>
            <person name="Ueda A."/>
            <person name="Wood T.K."/>
        </authorList>
    </citation>
    <scope>INDUCTION BY 5-FLUOROURACIL</scope>
    <source>
        <strain>K12 / ATCC 25404 / DSM 5698 / NCIMB 11290</strain>
    </source>
</reference>
<reference key="5">
    <citation type="journal article" date="2009" name="Genes Dev.">
        <title>The BLUF-EAL protein YcgF acts as a direct anti-repressor in a blue-light response of Escherichia coli.</title>
        <authorList>
            <person name="Tschowri N."/>
            <person name="Busse S."/>
            <person name="Hengge R."/>
        </authorList>
    </citation>
    <scope>INDUCTION BY COLD</scope>
    <scope>RPOS-DEPENDENCE</scope>
    <scope>REPRESSION BY YCGE</scope>
    <scope>OPERON STRUCTURE</scope>
    <source>
        <strain>K12 / MC4100</strain>
    </source>
</reference>
<sequence>MKTSDNERIKYEITGQAVLQILRMKINFSLQTLIKQLLVMKSAEEDAFRRDLIDSIIRDFSNSDSGGPNRRTATADNKSMFNGKKINRIH</sequence>
<name>YMGA_ECOLI</name>
<keyword id="KW-1185">Reference proteome</keyword>
<protein>
    <recommendedName>
        <fullName>Probable two-component-system connector protein YmgA</fullName>
    </recommendedName>
</protein>
<feature type="chain" id="PRO_0000168862" description="Probable two-component-system connector protein YmgA">
    <location>
        <begin position="1"/>
        <end position="90"/>
    </location>
</feature>
<feature type="region of interest" description="Disordered" evidence="1">
    <location>
        <begin position="63"/>
        <end position="90"/>
    </location>
</feature>
<feature type="compositionally biased region" description="Polar residues" evidence="1">
    <location>
        <begin position="63"/>
        <end position="80"/>
    </location>
</feature>
<gene>
    <name type="primary">ymgA</name>
    <name type="ordered locus">b1165</name>
    <name type="ordered locus">JW1152</name>
</gene>